<comment type="function">
    <text evidence="1">Necessary for the introduction of cis unsaturation into fatty acids. Catalyzes the dehydration of (3R)-3-hydroxydecanoyl-ACP to E-(2)-decenoyl-ACP and then its isomerization to Z-(3)-decenoyl-ACP. Can catalyze the dehydratase reaction for beta-hydroxyacyl-ACPs with saturated chain lengths up to 16:0, being most active on intermediate chain length.</text>
</comment>
<comment type="catalytic activity">
    <reaction evidence="1">
        <text>a (3R)-hydroxyacyl-[ACP] = a (2E)-enoyl-[ACP] + H2O</text>
        <dbReference type="Rhea" id="RHEA:13097"/>
        <dbReference type="Rhea" id="RHEA-COMP:9925"/>
        <dbReference type="Rhea" id="RHEA-COMP:9945"/>
        <dbReference type="ChEBI" id="CHEBI:15377"/>
        <dbReference type="ChEBI" id="CHEBI:78784"/>
        <dbReference type="ChEBI" id="CHEBI:78827"/>
        <dbReference type="EC" id="4.2.1.59"/>
    </reaction>
</comment>
<comment type="catalytic activity">
    <reaction evidence="1">
        <text>(3R)-hydroxydecanoyl-[ACP] = (2E)-decenoyl-[ACP] + H2O</text>
        <dbReference type="Rhea" id="RHEA:41860"/>
        <dbReference type="Rhea" id="RHEA-COMP:9638"/>
        <dbReference type="Rhea" id="RHEA-COMP:9639"/>
        <dbReference type="ChEBI" id="CHEBI:15377"/>
        <dbReference type="ChEBI" id="CHEBI:78466"/>
        <dbReference type="ChEBI" id="CHEBI:78467"/>
    </reaction>
</comment>
<comment type="catalytic activity">
    <reaction evidence="1">
        <text>(2E)-decenoyl-[ACP] = (3Z)-decenoyl-[ACP]</text>
        <dbReference type="Rhea" id="RHEA:23568"/>
        <dbReference type="Rhea" id="RHEA-COMP:9639"/>
        <dbReference type="Rhea" id="RHEA-COMP:9927"/>
        <dbReference type="ChEBI" id="CHEBI:78467"/>
        <dbReference type="ChEBI" id="CHEBI:78798"/>
        <dbReference type="EC" id="5.3.3.14"/>
    </reaction>
</comment>
<comment type="pathway">
    <text evidence="1">Lipid metabolism; fatty acid biosynthesis.</text>
</comment>
<comment type="subunit">
    <text evidence="1">Homodimer.</text>
</comment>
<comment type="subcellular location">
    <subcellularLocation>
        <location evidence="1">Cytoplasm</location>
    </subcellularLocation>
</comment>
<comment type="similarity">
    <text evidence="1">Belongs to the thioester dehydratase family. FabA subfamily.</text>
</comment>
<protein>
    <recommendedName>
        <fullName evidence="1">3-hydroxydecanoyl-[acyl-carrier-protein] dehydratase</fullName>
        <ecNumber evidence="1">4.2.1.59</ecNumber>
    </recommendedName>
    <alternativeName>
        <fullName evidence="1">3-hydroxyacyl-[acyl-carrier-protein] dehydratase FabA</fullName>
    </alternativeName>
    <alternativeName>
        <fullName evidence="1">Beta-hydroxydecanoyl thioester dehydrase</fullName>
    </alternativeName>
    <alternativeName>
        <fullName evidence="1">Trans-2-decenoyl-[acyl-carrier-protein] isomerase</fullName>
        <ecNumber evidence="1">5.3.3.14</ecNumber>
    </alternativeName>
</protein>
<feature type="chain" id="PRO_0000267734" description="3-hydroxydecanoyl-[acyl-carrier-protein] dehydratase">
    <location>
        <begin position="1"/>
        <end position="170"/>
    </location>
</feature>
<feature type="active site" evidence="1">
    <location>
        <position position="71"/>
    </location>
</feature>
<sequence length="170" mass="18602">MAQTKSSYDYEDLLACARGELFGPGNAQLPAPPMLMFDRITEVSAEGGEFGKGFIRAELDIKPDLWFFPCHFIGDPVMPGCLGLDALWQMTGFFLGWLGEPGKGRAISTGEVKFSGMVTPAVKTVEYGVDLKRVMRGRLVLGIGDGWLKADGETIYRASDLRVGLFKQES</sequence>
<keyword id="KW-0963">Cytoplasm</keyword>
<keyword id="KW-0275">Fatty acid biosynthesis</keyword>
<keyword id="KW-0276">Fatty acid metabolism</keyword>
<keyword id="KW-0413">Isomerase</keyword>
<keyword id="KW-0444">Lipid biosynthesis</keyword>
<keyword id="KW-0443">Lipid metabolism</keyword>
<keyword id="KW-0456">Lyase</keyword>
<proteinExistence type="inferred from homology"/>
<dbReference type="EC" id="4.2.1.59" evidence="1"/>
<dbReference type="EC" id="5.3.3.14" evidence="1"/>
<dbReference type="EMBL" id="CP000390">
    <property type="protein sequence ID" value="ABG65306.1"/>
    <property type="molecule type" value="Genomic_DNA"/>
</dbReference>
<dbReference type="SMR" id="Q11BB9"/>
<dbReference type="STRING" id="266779.Meso_3939"/>
<dbReference type="KEGG" id="mes:Meso_3939"/>
<dbReference type="eggNOG" id="COG0764">
    <property type="taxonomic scope" value="Bacteria"/>
</dbReference>
<dbReference type="HOGENOM" id="CLU_097925_0_0_5"/>
<dbReference type="OrthoDB" id="9786735at2"/>
<dbReference type="UniPathway" id="UPA00094"/>
<dbReference type="GO" id="GO:0005737">
    <property type="term" value="C:cytoplasm"/>
    <property type="evidence" value="ECO:0007669"/>
    <property type="project" value="UniProtKB-SubCell"/>
</dbReference>
<dbReference type="GO" id="GO:0019171">
    <property type="term" value="F:(3R)-hydroxyacyl-[acyl-carrier-protein] dehydratase activity"/>
    <property type="evidence" value="ECO:0007669"/>
    <property type="project" value="UniProtKB-UniRule"/>
</dbReference>
<dbReference type="GO" id="GO:0034017">
    <property type="term" value="F:trans-2-decenoyl-acyl-carrier-protein isomerase activity"/>
    <property type="evidence" value="ECO:0007669"/>
    <property type="project" value="UniProtKB-UniRule"/>
</dbReference>
<dbReference type="GO" id="GO:0006636">
    <property type="term" value="P:unsaturated fatty acid biosynthetic process"/>
    <property type="evidence" value="ECO:0007669"/>
    <property type="project" value="UniProtKB-UniRule"/>
</dbReference>
<dbReference type="CDD" id="cd01287">
    <property type="entry name" value="FabA"/>
    <property type="match status" value="1"/>
</dbReference>
<dbReference type="Gene3D" id="3.10.129.10">
    <property type="entry name" value="Hotdog Thioesterase"/>
    <property type="match status" value="1"/>
</dbReference>
<dbReference type="HAMAP" id="MF_00405">
    <property type="entry name" value="FabA"/>
    <property type="match status" value="1"/>
</dbReference>
<dbReference type="InterPro" id="IPR010083">
    <property type="entry name" value="FabA"/>
</dbReference>
<dbReference type="InterPro" id="IPR013114">
    <property type="entry name" value="FabA_FabZ"/>
</dbReference>
<dbReference type="InterPro" id="IPR029069">
    <property type="entry name" value="HotDog_dom_sf"/>
</dbReference>
<dbReference type="NCBIfam" id="TIGR01749">
    <property type="entry name" value="fabA"/>
    <property type="match status" value="1"/>
</dbReference>
<dbReference type="NCBIfam" id="NF003509">
    <property type="entry name" value="PRK05174.1"/>
    <property type="match status" value="1"/>
</dbReference>
<dbReference type="PANTHER" id="PTHR30272">
    <property type="entry name" value="3-HYDROXYACYL-[ACYL-CARRIER-PROTEIN] DEHYDRATASE"/>
    <property type="match status" value="1"/>
</dbReference>
<dbReference type="PANTHER" id="PTHR30272:SF8">
    <property type="entry name" value="3-HYDROXYDECANOYL-[ACYL-CARRIER-PROTEIN] DEHYDRATASE"/>
    <property type="match status" value="1"/>
</dbReference>
<dbReference type="Pfam" id="PF07977">
    <property type="entry name" value="FabA"/>
    <property type="match status" value="1"/>
</dbReference>
<dbReference type="SUPFAM" id="SSF54637">
    <property type="entry name" value="Thioesterase/thiol ester dehydrase-isomerase"/>
    <property type="match status" value="1"/>
</dbReference>
<gene>
    <name evidence="1" type="primary">fabA</name>
    <name type="ordered locus">Meso_3939</name>
</gene>
<organism>
    <name type="scientific">Chelativorans sp. (strain BNC1)</name>
    <dbReference type="NCBI Taxonomy" id="266779"/>
    <lineage>
        <taxon>Bacteria</taxon>
        <taxon>Pseudomonadati</taxon>
        <taxon>Pseudomonadota</taxon>
        <taxon>Alphaproteobacteria</taxon>
        <taxon>Hyphomicrobiales</taxon>
        <taxon>Phyllobacteriaceae</taxon>
        <taxon>Chelativorans</taxon>
    </lineage>
</organism>
<name>FABA_CHESB</name>
<reference key="1">
    <citation type="submission" date="2006-06" db="EMBL/GenBank/DDBJ databases">
        <title>Complete sequence of chromosome of Mesorhizobium sp. BNC1.</title>
        <authorList>
            <consortium name="US DOE Joint Genome Institute"/>
            <person name="Copeland A."/>
            <person name="Lucas S."/>
            <person name="Lapidus A."/>
            <person name="Barry K."/>
            <person name="Detter J.C."/>
            <person name="Glavina del Rio T."/>
            <person name="Hammon N."/>
            <person name="Israni S."/>
            <person name="Dalin E."/>
            <person name="Tice H."/>
            <person name="Pitluck S."/>
            <person name="Chertkov O."/>
            <person name="Brettin T."/>
            <person name="Bruce D."/>
            <person name="Han C."/>
            <person name="Tapia R."/>
            <person name="Gilna P."/>
            <person name="Schmutz J."/>
            <person name="Larimer F."/>
            <person name="Land M."/>
            <person name="Hauser L."/>
            <person name="Kyrpides N."/>
            <person name="Mikhailova N."/>
            <person name="Richardson P."/>
        </authorList>
    </citation>
    <scope>NUCLEOTIDE SEQUENCE [LARGE SCALE GENOMIC DNA]</scope>
    <source>
        <strain>BNC1</strain>
    </source>
</reference>
<accession>Q11BB9</accession>
<evidence type="ECO:0000255" key="1">
    <source>
        <dbReference type="HAMAP-Rule" id="MF_00405"/>
    </source>
</evidence>